<protein>
    <recommendedName>
        <fullName>Histone H2B type 1-K</fullName>
        <shortName>H2B K</shortName>
    </recommendedName>
    <alternativeName>
        <fullName>HIRA-interacting protein 1</fullName>
    </alternativeName>
</protein>
<accession>O60814</accession>
<accession>A8K7P7</accession>
<accession>Q2VPI7</accession>
<gene>
    <name evidence="32" type="primary">H2BC12</name>
    <name evidence="32" type="synonym">H2BFT</name>
    <name type="synonym">HIRIP1</name>
    <name evidence="32" type="synonym">HIST1H2BK</name>
</gene>
<name>H2B1K_HUMAN</name>
<organism>
    <name type="scientific">Homo sapiens</name>
    <name type="common">Human</name>
    <dbReference type="NCBI Taxonomy" id="9606"/>
    <lineage>
        <taxon>Eukaryota</taxon>
        <taxon>Metazoa</taxon>
        <taxon>Chordata</taxon>
        <taxon>Craniata</taxon>
        <taxon>Vertebrata</taxon>
        <taxon>Euteleostomi</taxon>
        <taxon>Mammalia</taxon>
        <taxon>Eutheria</taxon>
        <taxon>Euarchontoglires</taxon>
        <taxon>Primates</taxon>
        <taxon>Haplorrhini</taxon>
        <taxon>Catarrhini</taxon>
        <taxon>Hominidae</taxon>
        <taxon>Homo</taxon>
    </lineage>
</organism>
<dbReference type="EMBL" id="AJ223352">
    <property type="protein sequence ID" value="CAA11276.1"/>
    <property type="molecule type" value="mRNA"/>
</dbReference>
<dbReference type="EMBL" id="AF531294">
    <property type="protein sequence ID" value="AAN06694.1"/>
    <property type="molecule type" value="Genomic_DNA"/>
</dbReference>
<dbReference type="EMBL" id="AK292062">
    <property type="protein sequence ID" value="BAF84751.1"/>
    <property type="molecule type" value="mRNA"/>
</dbReference>
<dbReference type="EMBL" id="AL021807">
    <property type="status" value="NOT_ANNOTATED_CDS"/>
    <property type="molecule type" value="Genomic_DNA"/>
</dbReference>
<dbReference type="EMBL" id="CH471081">
    <property type="protein sequence ID" value="EAX03084.1"/>
    <property type="molecule type" value="Genomic_DNA"/>
</dbReference>
<dbReference type="EMBL" id="BC000893">
    <property type="protein sequence ID" value="AAH00893.1"/>
    <property type="molecule type" value="mRNA"/>
</dbReference>
<dbReference type="EMBL" id="BC051872">
    <property type="protein sequence ID" value="AAH51872.1"/>
    <property type="molecule type" value="mRNA"/>
</dbReference>
<dbReference type="EMBL" id="BC064959">
    <property type="protein sequence ID" value="AAH64959.1"/>
    <property type="molecule type" value="mRNA"/>
</dbReference>
<dbReference type="EMBL" id="BC108737">
    <property type="protein sequence ID" value="AAI08738.1"/>
    <property type="molecule type" value="mRNA"/>
</dbReference>
<dbReference type="CCDS" id="CCDS4621.1"/>
<dbReference type="PIR" id="S65409">
    <property type="entry name" value="S65409"/>
</dbReference>
<dbReference type="RefSeq" id="NP_001299582.1">
    <property type="nucleotide sequence ID" value="NM_001312653.2"/>
</dbReference>
<dbReference type="RefSeq" id="NP_542160.1">
    <property type="nucleotide sequence ID" value="NM_080593.2"/>
</dbReference>
<dbReference type="PDB" id="2CV5">
    <property type="method" value="X-ray"/>
    <property type="resolution" value="2.50 A"/>
    <property type="chains" value="D/H=1-126"/>
</dbReference>
<dbReference type="PDB" id="6KE9">
    <property type="method" value="X-ray"/>
    <property type="resolution" value="2.22 A"/>
    <property type="chains" value="D/H=32-126"/>
</dbReference>
<dbReference type="PDB" id="6L9H">
    <property type="method" value="X-ray"/>
    <property type="resolution" value="2.60 A"/>
    <property type="chains" value="D/H=32-126"/>
</dbReference>
<dbReference type="PDB" id="6LE9">
    <property type="method" value="X-ray"/>
    <property type="resolution" value="2.60 A"/>
    <property type="chains" value="D/H=32-126"/>
</dbReference>
<dbReference type="PDB" id="6T79">
    <property type="method" value="EM"/>
    <property type="resolution" value="3.20 A"/>
    <property type="chains" value="D/H=1-126"/>
</dbReference>
<dbReference type="PDB" id="6T7A">
    <property type="method" value="EM"/>
    <property type="resolution" value="3.70 A"/>
    <property type="chains" value="D/H=1-126"/>
</dbReference>
<dbReference type="PDB" id="6T7B">
    <property type="method" value="EM"/>
    <property type="resolution" value="5.10 A"/>
    <property type="chains" value="D/H=1-126"/>
</dbReference>
<dbReference type="PDB" id="6T7C">
    <property type="method" value="EM"/>
    <property type="resolution" value="4.00 A"/>
    <property type="chains" value="D/H=1-126"/>
</dbReference>
<dbReference type="PDB" id="6T7D">
    <property type="method" value="EM"/>
    <property type="resolution" value="4.40 A"/>
    <property type="chains" value="D/H=1-126"/>
</dbReference>
<dbReference type="PDB" id="6V92">
    <property type="method" value="EM"/>
    <property type="resolution" value="20.00 A"/>
    <property type="chains" value="d/h=1-126"/>
</dbReference>
<dbReference type="PDB" id="6Y5D">
    <property type="method" value="EM"/>
    <property type="resolution" value="4.10 A"/>
    <property type="chains" value="D/H/P/T=1-126"/>
</dbReference>
<dbReference type="PDB" id="7BWD">
    <property type="method" value="EM"/>
    <property type="resolution" value="4.32 A"/>
    <property type="chains" value="D/H=2-126"/>
</dbReference>
<dbReference type="PDB" id="7DBP">
    <property type="method" value="EM"/>
    <property type="resolution" value="4.50 A"/>
    <property type="chains" value="D/H=1-126"/>
</dbReference>
<dbReference type="PDB" id="7JZV">
    <property type="method" value="EM"/>
    <property type="resolution" value="3.90 A"/>
    <property type="chains" value="O/o=2-126"/>
</dbReference>
<dbReference type="PDB" id="7PET">
    <property type="method" value="EM"/>
    <property type="resolution" value="9.50 A"/>
    <property type="chains" value="D/H/N/R/d/h/n/r=1-126"/>
</dbReference>
<dbReference type="PDB" id="7PEU">
    <property type="method" value="EM"/>
    <property type="resolution" value="7.20 A"/>
    <property type="chains" value="D/H/N/R/d/h=1-126"/>
</dbReference>
<dbReference type="PDB" id="7PEV">
    <property type="method" value="EM"/>
    <property type="resolution" value="6.00 A"/>
    <property type="chains" value="D/H/N/R=1-126"/>
</dbReference>
<dbReference type="PDB" id="7PEW">
    <property type="method" value="EM"/>
    <property type="resolution" value="4.60 A"/>
    <property type="chains" value="D/H=1-126"/>
</dbReference>
<dbReference type="PDB" id="7PEX">
    <property type="method" value="EM"/>
    <property type="resolution" value="5.10 A"/>
    <property type="chains" value="d/h=1-126"/>
</dbReference>
<dbReference type="PDB" id="7PEY">
    <property type="method" value="EM"/>
    <property type="resolution" value="4.50 A"/>
    <property type="chains" value="N/R=1-126"/>
</dbReference>
<dbReference type="PDB" id="7PEZ">
    <property type="method" value="EM"/>
    <property type="resolution" value="7.90 A"/>
    <property type="chains" value="e/n=1-126"/>
</dbReference>
<dbReference type="PDB" id="7PF0">
    <property type="method" value="EM"/>
    <property type="resolution" value="11.00 A"/>
    <property type="chains" value="D/H/N/R/d/h=1-126"/>
</dbReference>
<dbReference type="PDB" id="7PF2">
    <property type="method" value="EM"/>
    <property type="resolution" value="5.10 A"/>
    <property type="chains" value="D/H/N/R=1-126"/>
</dbReference>
<dbReference type="PDB" id="7PF3">
    <property type="method" value="EM"/>
    <property type="resolution" value="4.00 A"/>
    <property type="chains" value="n/r=1-126"/>
</dbReference>
<dbReference type="PDB" id="7PF4">
    <property type="method" value="EM"/>
    <property type="resolution" value="4.00 A"/>
    <property type="chains" value="N/R=1-126"/>
</dbReference>
<dbReference type="PDB" id="7PF5">
    <property type="method" value="EM"/>
    <property type="resolution" value="3.80 A"/>
    <property type="chains" value="d/h=1-126"/>
</dbReference>
<dbReference type="PDB" id="7PF6">
    <property type="method" value="EM"/>
    <property type="resolution" value="4.00 A"/>
    <property type="chains" value="D/H=1-126"/>
</dbReference>
<dbReference type="PDB" id="7PFA">
    <property type="method" value="EM"/>
    <property type="resolution" value="9.70 A"/>
    <property type="chains" value="D/H/N/R/d/h=1-126"/>
</dbReference>
<dbReference type="PDB" id="7PFC">
    <property type="method" value="EM"/>
    <property type="resolution" value="6.40 A"/>
    <property type="chains" value="D/H/N/R=1-126"/>
</dbReference>
<dbReference type="PDB" id="7PFD">
    <property type="method" value="EM"/>
    <property type="resolution" value="4.40 A"/>
    <property type="chains" value="D/H=1-126"/>
</dbReference>
<dbReference type="PDB" id="7PFE">
    <property type="method" value="EM"/>
    <property type="resolution" value="4.40 A"/>
    <property type="chains" value="d/h=1-126"/>
</dbReference>
<dbReference type="PDB" id="7PFF">
    <property type="method" value="EM"/>
    <property type="resolution" value="4.30 A"/>
    <property type="chains" value="N/R=1-126"/>
</dbReference>
<dbReference type="PDB" id="7PFT">
    <property type="method" value="EM"/>
    <property type="resolution" value="9.80 A"/>
    <property type="chains" value="D/H/N/R/d/h=1-126"/>
</dbReference>
<dbReference type="PDB" id="7PFU">
    <property type="method" value="EM"/>
    <property type="resolution" value="5.00 A"/>
    <property type="chains" value="D/H/N/R=1-126"/>
</dbReference>
<dbReference type="PDB" id="7PFV">
    <property type="method" value="EM"/>
    <property type="resolution" value="4.40 A"/>
    <property type="chains" value="D/H=1-126"/>
</dbReference>
<dbReference type="PDB" id="7PFW">
    <property type="method" value="EM"/>
    <property type="resolution" value="5.20 A"/>
    <property type="chains" value="d/h=1-126"/>
</dbReference>
<dbReference type="PDB" id="7PFX">
    <property type="method" value="EM"/>
    <property type="resolution" value="4.30 A"/>
    <property type="chains" value="N/R=1-126"/>
</dbReference>
<dbReference type="PDB" id="7V90">
    <property type="method" value="EM"/>
    <property type="resolution" value="3.50 A"/>
    <property type="chains" value="D/H=28-126"/>
</dbReference>
<dbReference type="PDB" id="7V96">
    <property type="method" value="EM"/>
    <property type="resolution" value="3.92 A"/>
    <property type="chains" value="D/H/N/R=28-126"/>
</dbReference>
<dbReference type="PDB" id="7V99">
    <property type="method" value="EM"/>
    <property type="resolution" value="3.54 A"/>
    <property type="chains" value="L=2-126"/>
</dbReference>
<dbReference type="PDB" id="7V9C">
    <property type="method" value="EM"/>
    <property type="resolution" value="4.50 A"/>
    <property type="chains" value="D/H/N/R=32-126"/>
</dbReference>
<dbReference type="PDB" id="7V9J">
    <property type="method" value="EM"/>
    <property type="resolution" value="8.00 A"/>
    <property type="chains" value="D/H/N/R/V/Z=28-126"/>
</dbReference>
<dbReference type="PDB" id="7V9K">
    <property type="method" value="EM"/>
    <property type="resolution" value="8.10 A"/>
    <property type="chains" value="D/H/N/R/V/Z/d/h=28-126"/>
</dbReference>
<dbReference type="PDB" id="7V9S">
    <property type="method" value="EM"/>
    <property type="resolution" value="11.00 A"/>
    <property type="chains" value="D/H/N/R/V/Z=28-126"/>
</dbReference>
<dbReference type="PDB" id="7VA4">
    <property type="method" value="EM"/>
    <property type="resolution" value="14.00 A"/>
    <property type="chains" value="D/H/N/R/V/Z/d/h=32-126"/>
</dbReference>
<dbReference type="PDB" id="7XCR">
    <property type="method" value="EM"/>
    <property type="resolution" value="2.57 A"/>
    <property type="chains" value="D/H=32-125"/>
</dbReference>
<dbReference type="PDB" id="7XCT">
    <property type="method" value="EM"/>
    <property type="resolution" value="2.72 A"/>
    <property type="chains" value="D/H=33-125"/>
</dbReference>
<dbReference type="PDB" id="7XD1">
    <property type="method" value="EM"/>
    <property type="resolution" value="3.20 A"/>
    <property type="chains" value="D/H=32-125"/>
</dbReference>
<dbReference type="PDB" id="8GRQ">
    <property type="method" value="EM"/>
    <property type="resolution" value="3.87 A"/>
    <property type="chains" value="D/H=11-125"/>
</dbReference>
<dbReference type="PDB" id="8HQY">
    <property type="method" value="EM"/>
    <property type="resolution" value="3.05 A"/>
    <property type="chains" value="D/H=35-125"/>
</dbReference>
<dbReference type="PDB" id="8HR1">
    <property type="method" value="EM"/>
    <property type="resolution" value="3.02 A"/>
    <property type="chains" value="D/H=35-125"/>
</dbReference>
<dbReference type="PDB" id="8IEG">
    <property type="method" value="EM"/>
    <property type="resolution" value="3.44 A"/>
    <property type="chains" value="D/H=32-125"/>
</dbReference>
<dbReference type="PDB" id="8IEJ">
    <property type="method" value="EM"/>
    <property type="resolution" value="3.12 A"/>
    <property type="chains" value="D/H=32-125"/>
</dbReference>
<dbReference type="PDB" id="8JHF">
    <property type="method" value="EM"/>
    <property type="resolution" value="3.68 A"/>
    <property type="chains" value="D/H=32-126"/>
</dbReference>
<dbReference type="PDB" id="8JHG">
    <property type="method" value="EM"/>
    <property type="resolution" value="3.58 A"/>
    <property type="chains" value="D/H=32-126"/>
</dbReference>
<dbReference type="PDB" id="8Q36">
    <property type="method" value="X-ray"/>
    <property type="resolution" value="2.60 A"/>
    <property type="chains" value="DDD/HHH=32-126"/>
</dbReference>
<dbReference type="PDB" id="8Q3E">
    <property type="method" value="X-ray"/>
    <property type="resolution" value="2.17 A"/>
    <property type="chains" value="DDD/HHH=32-126"/>
</dbReference>
<dbReference type="PDB" id="8Q3M">
    <property type="method" value="X-ray"/>
    <property type="resolution" value="2.50 A"/>
    <property type="chains" value="DDD/HHH=32-126"/>
</dbReference>
<dbReference type="PDB" id="8Q3X">
    <property type="method" value="X-ray"/>
    <property type="resolution" value="2.30 A"/>
    <property type="chains" value="DDD/HHH=32-126"/>
</dbReference>
<dbReference type="PDB" id="8W9D">
    <property type="method" value="EM"/>
    <property type="resolution" value="3.90 A"/>
    <property type="chains" value="d/h=1-126"/>
</dbReference>
<dbReference type="PDB" id="8W9E">
    <property type="method" value="EM"/>
    <property type="resolution" value="3.60 A"/>
    <property type="chains" value="d/h=1-126"/>
</dbReference>
<dbReference type="PDB" id="8W9F">
    <property type="method" value="EM"/>
    <property type="resolution" value="4.40 A"/>
    <property type="chains" value="d/h=1-126"/>
</dbReference>
<dbReference type="PDB" id="8WG5">
    <property type="method" value="EM"/>
    <property type="resolution" value="3.05 A"/>
    <property type="chains" value="D/H=32-125"/>
</dbReference>
<dbReference type="PDB" id="8X7I">
    <property type="method" value="EM"/>
    <property type="resolution" value="3.27 A"/>
    <property type="chains" value="D/H=32-125"/>
</dbReference>
<dbReference type="PDB" id="8X7J">
    <property type="method" value="EM"/>
    <property type="resolution" value="3.39 A"/>
    <property type="chains" value="D/H=32-125"/>
</dbReference>
<dbReference type="PDB" id="8X7K">
    <property type="method" value="EM"/>
    <property type="resolution" value="3.27 A"/>
    <property type="chains" value="D/H=32-125"/>
</dbReference>
<dbReference type="PDB" id="8YV8">
    <property type="method" value="EM"/>
    <property type="resolution" value="3.00 A"/>
    <property type="chains" value="D/H=2-126"/>
</dbReference>
<dbReference type="PDB" id="9IPU">
    <property type="method" value="EM"/>
    <property type="resolution" value="4.30 A"/>
    <property type="chains" value="D/H=2-126"/>
</dbReference>
<dbReference type="PDBsum" id="2CV5"/>
<dbReference type="PDBsum" id="6KE9"/>
<dbReference type="PDBsum" id="6L9H"/>
<dbReference type="PDBsum" id="6LE9"/>
<dbReference type="PDBsum" id="6T79"/>
<dbReference type="PDBsum" id="6T7A"/>
<dbReference type="PDBsum" id="6T7B"/>
<dbReference type="PDBsum" id="6T7C"/>
<dbReference type="PDBsum" id="6T7D"/>
<dbReference type="PDBsum" id="6V92"/>
<dbReference type="PDBsum" id="6Y5D"/>
<dbReference type="PDBsum" id="7BWD"/>
<dbReference type="PDBsum" id="7DBP"/>
<dbReference type="PDBsum" id="7JZV"/>
<dbReference type="PDBsum" id="7PET"/>
<dbReference type="PDBsum" id="7PEU"/>
<dbReference type="PDBsum" id="7PEV"/>
<dbReference type="PDBsum" id="7PEW"/>
<dbReference type="PDBsum" id="7PEX"/>
<dbReference type="PDBsum" id="7PEY"/>
<dbReference type="PDBsum" id="7PEZ"/>
<dbReference type="PDBsum" id="7PF0"/>
<dbReference type="PDBsum" id="7PF2"/>
<dbReference type="PDBsum" id="7PF3"/>
<dbReference type="PDBsum" id="7PF4"/>
<dbReference type="PDBsum" id="7PF5"/>
<dbReference type="PDBsum" id="7PF6"/>
<dbReference type="PDBsum" id="7PFA"/>
<dbReference type="PDBsum" id="7PFC"/>
<dbReference type="PDBsum" id="7PFD"/>
<dbReference type="PDBsum" id="7PFE"/>
<dbReference type="PDBsum" id="7PFF"/>
<dbReference type="PDBsum" id="7PFT"/>
<dbReference type="PDBsum" id="7PFU"/>
<dbReference type="PDBsum" id="7PFV"/>
<dbReference type="PDBsum" id="7PFW"/>
<dbReference type="PDBsum" id="7PFX"/>
<dbReference type="PDBsum" id="7V90"/>
<dbReference type="PDBsum" id="7V96"/>
<dbReference type="PDBsum" id="7V99"/>
<dbReference type="PDBsum" id="7V9C"/>
<dbReference type="PDBsum" id="7V9J"/>
<dbReference type="PDBsum" id="7V9K"/>
<dbReference type="PDBsum" id="7V9S"/>
<dbReference type="PDBsum" id="7VA4"/>
<dbReference type="PDBsum" id="7XCR"/>
<dbReference type="PDBsum" id="7XCT"/>
<dbReference type="PDBsum" id="7XD1"/>
<dbReference type="PDBsum" id="8GRQ"/>
<dbReference type="PDBsum" id="8HQY"/>
<dbReference type="PDBsum" id="8HR1"/>
<dbReference type="PDBsum" id="8IEG"/>
<dbReference type="PDBsum" id="8IEJ"/>
<dbReference type="PDBsum" id="8JHF"/>
<dbReference type="PDBsum" id="8JHG"/>
<dbReference type="PDBsum" id="8Q36"/>
<dbReference type="PDBsum" id="8Q3E"/>
<dbReference type="PDBsum" id="8Q3M"/>
<dbReference type="PDBsum" id="8Q3X"/>
<dbReference type="PDBsum" id="8W9D"/>
<dbReference type="PDBsum" id="8W9E"/>
<dbReference type="PDBsum" id="8W9F"/>
<dbReference type="PDBsum" id="8WG5"/>
<dbReference type="PDBsum" id="8X7I"/>
<dbReference type="PDBsum" id="8X7J"/>
<dbReference type="PDBsum" id="8X7K"/>
<dbReference type="PDBsum" id="8YV8"/>
<dbReference type="PDBsum" id="9IPU"/>
<dbReference type="EMDB" id="EMD-10390"/>
<dbReference type="EMDB" id="EMD-10391"/>
<dbReference type="EMDB" id="EMD-10392"/>
<dbReference type="EMDB" id="EMD-10393"/>
<dbReference type="EMDB" id="EMD-10394"/>
<dbReference type="EMDB" id="EMD-10694"/>
<dbReference type="EMDB" id="EMD-10695"/>
<dbReference type="EMDB" id="EMD-11005"/>
<dbReference type="EMDB" id="EMD-11006"/>
<dbReference type="EMDB" id="EMD-13356"/>
<dbReference type="EMDB" id="EMD-13357"/>
<dbReference type="EMDB" id="EMD-13358"/>
<dbReference type="EMDB" id="EMD-13359"/>
<dbReference type="EMDB" id="EMD-13360"/>
<dbReference type="EMDB" id="EMD-13361"/>
<dbReference type="EMDB" id="EMD-13362"/>
<dbReference type="EMDB" id="EMD-13363"/>
<dbReference type="EMDB" id="EMD-13365"/>
<dbReference type="EMDB" id="EMD-13366"/>
<dbReference type="EMDB" id="EMD-13367"/>
<dbReference type="EMDB" id="EMD-13368"/>
<dbReference type="EMDB" id="EMD-13369"/>
<dbReference type="EMDB" id="EMD-13370"/>
<dbReference type="EMDB" id="EMD-13371"/>
<dbReference type="EMDB" id="EMD-13372"/>
<dbReference type="EMDB" id="EMD-13373"/>
<dbReference type="EMDB" id="EMD-13374"/>
<dbReference type="EMDB" id="EMD-13379"/>
<dbReference type="EMDB" id="EMD-13380"/>
<dbReference type="EMDB" id="EMD-13381"/>
<dbReference type="EMDB" id="EMD-13382"/>
<dbReference type="EMDB" id="EMD-13383"/>
<dbReference type="EMDB" id="EMD-21114"/>
<dbReference type="EMDB" id="EMD-22581"/>
<dbReference type="EMDB" id="EMD-30232"/>
<dbReference type="EMDB" id="EMD-31806"/>
<dbReference type="EMDB" id="EMD-31810"/>
<dbReference type="EMDB" id="EMD-31811"/>
<dbReference type="EMDB" id="EMD-31812"/>
<dbReference type="EMDB" id="EMD-31815"/>
<dbReference type="EMDB" id="EMD-31816"/>
<dbReference type="EMDB" id="EMD-31823"/>
<dbReference type="EMDB" id="EMD-31826"/>
<dbReference type="EMDB" id="EMD-31832"/>
<dbReference type="EMDB" id="EMD-33126"/>
<dbReference type="EMDB" id="EMD-33127"/>
<dbReference type="EMDB" id="EMD-33132"/>
<dbReference type="EMDB" id="EMD-34207"/>
<dbReference type="EMDB" id="EMD-34212"/>
<dbReference type="EMDB" id="EMD-34954"/>
<dbReference type="EMDB" id="EMD-34956"/>
<dbReference type="EMDB" id="EMD-35381"/>
<dbReference type="EMDB" id="EMD-35383"/>
<dbReference type="EMDB" id="EMD-36264"/>
<dbReference type="EMDB" id="EMD-36265"/>
<dbReference type="EMDB" id="EMD-37365"/>
<dbReference type="EMDB" id="EMD-37366"/>
<dbReference type="EMDB" id="EMD-37367"/>
<dbReference type="EMDB" id="EMD-37503"/>
<dbReference type="EMDB" id="EMD-38099"/>
<dbReference type="EMDB" id="EMD-38100"/>
<dbReference type="EMDB" id="EMD-38101"/>
<dbReference type="EMDB" id="EMD-39594"/>
<dbReference type="EMDB" id="EMD-60781"/>
<dbReference type="SMR" id="O60814"/>
<dbReference type="BioGRID" id="124439">
    <property type="interactions" value="349"/>
</dbReference>
<dbReference type="ComplexPortal" id="CPX-2558">
    <property type="entry name" value="Nucleosome complex, H2BC12 variant"/>
</dbReference>
<dbReference type="DIP" id="DIP-48935N"/>
<dbReference type="FunCoup" id="O60814">
    <property type="interactions" value="1121"/>
</dbReference>
<dbReference type="IntAct" id="O60814">
    <property type="interactions" value="47"/>
</dbReference>
<dbReference type="MINT" id="O60814"/>
<dbReference type="STRING" id="9606.ENSP00000349430"/>
<dbReference type="GlyCosmos" id="O60814">
    <property type="glycosylation" value="1 site, No reported glycans"/>
</dbReference>
<dbReference type="GlyGen" id="O60814">
    <property type="glycosylation" value="2 sites, 1 O-linked glycan (1 site)"/>
</dbReference>
<dbReference type="iPTMnet" id="O60814"/>
<dbReference type="MetOSite" id="O60814"/>
<dbReference type="PhosphoSitePlus" id="O60814"/>
<dbReference type="SwissPalm" id="O60814"/>
<dbReference type="BioMuta" id="HIST1H2BK"/>
<dbReference type="jPOST" id="O60814"/>
<dbReference type="MassIVE" id="O60814"/>
<dbReference type="PaxDb" id="9606-ENSP00000349430"/>
<dbReference type="PeptideAtlas" id="O60814"/>
<dbReference type="PRIDE" id="O60814"/>
<dbReference type="Pumba" id="O60814"/>
<dbReference type="TopDownProteomics" id="O60814"/>
<dbReference type="Antibodypedia" id="25744">
    <property type="antibodies" value="102 antibodies from 18 providers"/>
</dbReference>
<dbReference type="DNASU" id="85236"/>
<dbReference type="Ensembl" id="ENST00000356950.2">
    <property type="protein sequence ID" value="ENSP00000349430.2"/>
    <property type="gene ID" value="ENSG00000197903.9"/>
</dbReference>
<dbReference type="Ensembl" id="ENST00000715895.1">
    <property type="protein sequence ID" value="ENSP00000520531.1"/>
    <property type="gene ID" value="ENSG00000197903.9"/>
</dbReference>
<dbReference type="GeneID" id="85236"/>
<dbReference type="KEGG" id="hsa:85236"/>
<dbReference type="MANE-Select" id="ENST00000356950.2">
    <property type="protein sequence ID" value="ENSP00000349430.2"/>
    <property type="RefSeq nucleotide sequence ID" value="NM_001312653.2"/>
    <property type="RefSeq protein sequence ID" value="NP_001299582.1"/>
</dbReference>
<dbReference type="UCSC" id="uc063mja.1">
    <property type="organism name" value="human"/>
</dbReference>
<dbReference type="AGR" id="HGNC:13954"/>
<dbReference type="CTD" id="85236"/>
<dbReference type="DisGeNET" id="85236"/>
<dbReference type="GeneCards" id="H2BC12"/>
<dbReference type="HGNC" id="HGNC:13954">
    <property type="gene designation" value="H2BC12"/>
</dbReference>
<dbReference type="HPA" id="ENSG00000197903">
    <property type="expression patterns" value="Low tissue specificity"/>
</dbReference>
<dbReference type="MalaCards" id="H2BC12"/>
<dbReference type="MIM" id="615045">
    <property type="type" value="gene"/>
</dbReference>
<dbReference type="neXtProt" id="NX_O60814"/>
<dbReference type="OpenTargets" id="ENSG00000197903"/>
<dbReference type="VEuPathDB" id="HostDB:ENSG00000197903"/>
<dbReference type="eggNOG" id="KOG1744">
    <property type="taxonomic scope" value="Eukaryota"/>
</dbReference>
<dbReference type="GeneTree" id="ENSGT01110000267152"/>
<dbReference type="HOGENOM" id="CLU_075666_2_1_1"/>
<dbReference type="InParanoid" id="O60814"/>
<dbReference type="OMA" id="RSKENWH"/>
<dbReference type="OrthoDB" id="9537006at2759"/>
<dbReference type="PAN-GO" id="O60814">
    <property type="GO annotations" value="2 GO annotations based on evolutionary models"/>
</dbReference>
<dbReference type="PhylomeDB" id="O60814"/>
<dbReference type="TreeFam" id="TF300212"/>
<dbReference type="PathwayCommons" id="O60814"/>
<dbReference type="Reactome" id="R-HSA-110328">
    <property type="pathway name" value="Recognition and association of DNA glycosylase with site containing an affected pyrimidine"/>
</dbReference>
<dbReference type="Reactome" id="R-HSA-110329">
    <property type="pathway name" value="Cleavage of the damaged pyrimidine"/>
</dbReference>
<dbReference type="Reactome" id="R-HSA-110330">
    <property type="pathway name" value="Recognition and association of DNA glycosylase with site containing an affected purine"/>
</dbReference>
<dbReference type="Reactome" id="R-HSA-110331">
    <property type="pathway name" value="Cleavage of the damaged purine"/>
</dbReference>
<dbReference type="Reactome" id="R-HSA-1221632">
    <property type="pathway name" value="Meiotic synapsis"/>
</dbReference>
<dbReference type="Reactome" id="R-HSA-171306">
    <property type="pathway name" value="Packaging Of Telomere Ends"/>
</dbReference>
<dbReference type="Reactome" id="R-HSA-1912408">
    <property type="pathway name" value="Pre-NOTCH Transcription and Translation"/>
</dbReference>
<dbReference type="Reactome" id="R-HSA-201722">
    <property type="pathway name" value="Formation of the beta-catenin:TCF transactivating complex"/>
</dbReference>
<dbReference type="Reactome" id="R-HSA-212300">
    <property type="pathway name" value="PRC2 methylates histones and DNA"/>
</dbReference>
<dbReference type="Reactome" id="R-HSA-2299718">
    <property type="pathway name" value="Condensation of Prophase Chromosomes"/>
</dbReference>
<dbReference type="Reactome" id="R-HSA-2559580">
    <property type="pathway name" value="Oxidative Stress Induced Senescence"/>
</dbReference>
<dbReference type="Reactome" id="R-HSA-2559582">
    <property type="pathway name" value="Senescence-Associated Secretory Phenotype (SASP)"/>
</dbReference>
<dbReference type="Reactome" id="R-HSA-2559586">
    <property type="pathway name" value="DNA Damage/Telomere Stress Induced Senescence"/>
</dbReference>
<dbReference type="Reactome" id="R-HSA-3214815">
    <property type="pathway name" value="HDACs deacetylate histones"/>
</dbReference>
<dbReference type="Reactome" id="R-HSA-3214847">
    <property type="pathway name" value="HATs acetylate histones"/>
</dbReference>
<dbReference type="Reactome" id="R-HSA-427359">
    <property type="pathway name" value="SIRT1 negatively regulates rRNA expression"/>
</dbReference>
<dbReference type="Reactome" id="R-HSA-427389">
    <property type="pathway name" value="ERCC6 (CSB) and EHMT2 (G9a) positively regulate rRNA expression"/>
</dbReference>
<dbReference type="Reactome" id="R-HSA-427413">
    <property type="pathway name" value="NoRC negatively regulates rRNA expression"/>
</dbReference>
<dbReference type="Reactome" id="R-HSA-5250924">
    <property type="pathway name" value="B-WICH complex positively regulates rRNA expression"/>
</dbReference>
<dbReference type="Reactome" id="R-HSA-5334118">
    <property type="pathway name" value="DNA methylation"/>
</dbReference>
<dbReference type="Reactome" id="R-HSA-5578749">
    <property type="pathway name" value="Transcriptional regulation by small RNAs"/>
</dbReference>
<dbReference type="Reactome" id="R-HSA-5617472">
    <property type="pathway name" value="Activation of anterior HOX genes in hindbrain development during early embryogenesis"/>
</dbReference>
<dbReference type="Reactome" id="R-HSA-5625886">
    <property type="pathway name" value="Activated PKN1 stimulates transcription of AR (androgen receptor) regulated genes KLK2 and KLK3"/>
</dbReference>
<dbReference type="Reactome" id="R-HSA-5689880">
    <property type="pathway name" value="Ub-specific processing proteases"/>
</dbReference>
<dbReference type="Reactome" id="R-HSA-5693565">
    <property type="pathway name" value="Recruitment and ATM-mediated phosphorylation of repair and signaling proteins at DNA double strand breaks"/>
</dbReference>
<dbReference type="Reactome" id="R-HSA-5693571">
    <property type="pathway name" value="Nonhomologous End-Joining (NHEJ)"/>
</dbReference>
<dbReference type="Reactome" id="R-HSA-5693607">
    <property type="pathway name" value="Processing of DNA double-strand break ends"/>
</dbReference>
<dbReference type="Reactome" id="R-HSA-606279">
    <property type="pathway name" value="Deposition of new CENPA-containing nucleosomes at the centromere"/>
</dbReference>
<dbReference type="Reactome" id="R-HSA-68616">
    <property type="pathway name" value="Assembly of the ORC complex at the origin of replication"/>
</dbReference>
<dbReference type="Reactome" id="R-HSA-69473">
    <property type="pathway name" value="G2/M DNA damage checkpoint"/>
</dbReference>
<dbReference type="Reactome" id="R-HSA-73728">
    <property type="pathway name" value="RNA Polymerase I Promoter Opening"/>
</dbReference>
<dbReference type="Reactome" id="R-HSA-73772">
    <property type="pathway name" value="RNA Polymerase I Promoter Escape"/>
</dbReference>
<dbReference type="Reactome" id="R-HSA-8866654">
    <property type="pathway name" value="E3 ubiquitin ligases ubiquitinate target proteins"/>
</dbReference>
<dbReference type="Reactome" id="R-HSA-8936459">
    <property type="pathway name" value="RUNX1 regulates genes involved in megakaryocyte differentiation and platelet function"/>
</dbReference>
<dbReference type="Reactome" id="R-HSA-8939236">
    <property type="pathway name" value="RUNX1 regulates transcription of genes involved in differentiation of HSCs"/>
</dbReference>
<dbReference type="Reactome" id="R-HSA-9018519">
    <property type="pathway name" value="Estrogen-dependent gene expression"/>
</dbReference>
<dbReference type="Reactome" id="R-HSA-912446">
    <property type="pathway name" value="Meiotic recombination"/>
</dbReference>
<dbReference type="Reactome" id="R-HSA-9609690">
    <property type="pathway name" value="HCMV Early Events"/>
</dbReference>
<dbReference type="Reactome" id="R-HSA-9610379">
    <property type="pathway name" value="HCMV Late Events"/>
</dbReference>
<dbReference type="Reactome" id="R-HSA-9616222">
    <property type="pathway name" value="Transcriptional regulation of granulopoiesis"/>
</dbReference>
<dbReference type="Reactome" id="R-HSA-9670095">
    <property type="pathway name" value="Inhibition of DNA recombination at telomere"/>
</dbReference>
<dbReference type="Reactome" id="R-HSA-9710421">
    <property type="pathway name" value="Defective pyroptosis"/>
</dbReference>
<dbReference type="Reactome" id="R-HSA-977225">
    <property type="pathway name" value="Amyloid fiber formation"/>
</dbReference>
<dbReference type="Reactome" id="R-HSA-9821002">
    <property type="pathway name" value="Chromatin modifications during the maternal to zygotic transition (MZT)"/>
</dbReference>
<dbReference type="Reactome" id="R-HSA-9821993">
    <property type="pathway name" value="Replacement of protamines by nucleosomes in the male pronucleus"/>
</dbReference>
<dbReference type="Reactome" id="R-HSA-9841922">
    <property type="pathway name" value="MLL4 and MLL3 complexes regulate expression of PPARG target genes in adipogenesis and hepatic steatosis"/>
</dbReference>
<dbReference type="Reactome" id="R-HSA-9843940">
    <property type="pathway name" value="Regulation of endogenous retroelements by KRAB-ZFP proteins"/>
</dbReference>
<dbReference type="Reactome" id="R-HSA-9843970">
    <property type="pathway name" value="Regulation of endogenous retroelements by the Human Silencing Hub (HUSH) complex"/>
</dbReference>
<dbReference type="Reactome" id="R-HSA-9845323">
    <property type="pathway name" value="Regulation of endogenous retroelements by Piwi-interacting RNAs (piRNAs)"/>
</dbReference>
<dbReference type="SignaLink" id="O60814"/>
<dbReference type="SIGNOR" id="O60814"/>
<dbReference type="BioGRID-ORCS" id="85236">
    <property type="hits" value="109 hits in 1109 CRISPR screens"/>
</dbReference>
<dbReference type="CD-CODE" id="91857CE7">
    <property type="entry name" value="Nucleolus"/>
</dbReference>
<dbReference type="ChiTaRS" id="HIST1H2BK">
    <property type="organism name" value="human"/>
</dbReference>
<dbReference type="EvolutionaryTrace" id="O60814"/>
<dbReference type="GeneWiki" id="HIST1H2BK"/>
<dbReference type="GenomeRNAi" id="85236"/>
<dbReference type="Pharos" id="O60814">
    <property type="development level" value="Tbio"/>
</dbReference>
<dbReference type="PRO" id="PR:O60814"/>
<dbReference type="Proteomes" id="UP000005640">
    <property type="component" value="Chromosome 6"/>
</dbReference>
<dbReference type="RNAct" id="O60814">
    <property type="molecule type" value="protein"/>
</dbReference>
<dbReference type="Bgee" id="ENSG00000197903">
    <property type="expression patterns" value="Expressed in bone marrow cell and 103 other cell types or tissues"/>
</dbReference>
<dbReference type="ExpressionAtlas" id="O60814">
    <property type="expression patterns" value="baseline and differential"/>
</dbReference>
<dbReference type="GO" id="GO:0005829">
    <property type="term" value="C:cytosol"/>
    <property type="evidence" value="ECO:0000314"/>
    <property type="project" value="HPA"/>
</dbReference>
<dbReference type="GO" id="GO:0005615">
    <property type="term" value="C:extracellular space"/>
    <property type="evidence" value="ECO:0000314"/>
    <property type="project" value="UniProtKB"/>
</dbReference>
<dbReference type="GO" id="GO:0005654">
    <property type="term" value="C:nucleoplasm"/>
    <property type="evidence" value="ECO:0000314"/>
    <property type="project" value="HPA"/>
</dbReference>
<dbReference type="GO" id="GO:0000786">
    <property type="term" value="C:nucleosome"/>
    <property type="evidence" value="ECO:0007669"/>
    <property type="project" value="UniProtKB-KW"/>
</dbReference>
<dbReference type="GO" id="GO:0005634">
    <property type="term" value="C:nucleus"/>
    <property type="evidence" value="ECO:0000314"/>
    <property type="project" value="UniProtKB"/>
</dbReference>
<dbReference type="GO" id="GO:0003677">
    <property type="term" value="F:DNA binding"/>
    <property type="evidence" value="ECO:0007669"/>
    <property type="project" value="UniProtKB-KW"/>
</dbReference>
<dbReference type="GO" id="GO:0046982">
    <property type="term" value="F:protein heterodimerization activity"/>
    <property type="evidence" value="ECO:0007669"/>
    <property type="project" value="InterPro"/>
</dbReference>
<dbReference type="GO" id="GO:0030527">
    <property type="term" value="F:structural constituent of chromatin"/>
    <property type="evidence" value="ECO:0007669"/>
    <property type="project" value="InterPro"/>
</dbReference>
<dbReference type="GO" id="GO:0019731">
    <property type="term" value="P:antibacterial humoral response"/>
    <property type="evidence" value="ECO:0000314"/>
    <property type="project" value="UniProtKB"/>
</dbReference>
<dbReference type="GO" id="GO:0061844">
    <property type="term" value="P:antimicrobial humoral immune response mediated by antimicrobial peptide"/>
    <property type="evidence" value="ECO:0000314"/>
    <property type="project" value="UniProtKB"/>
</dbReference>
<dbReference type="GO" id="GO:0050829">
    <property type="term" value="P:defense response to Gram-negative bacterium"/>
    <property type="evidence" value="ECO:0000314"/>
    <property type="project" value="UniProtKB"/>
</dbReference>
<dbReference type="GO" id="GO:0050830">
    <property type="term" value="P:defense response to Gram-positive bacterium"/>
    <property type="evidence" value="ECO:0000314"/>
    <property type="project" value="UniProtKB"/>
</dbReference>
<dbReference type="GO" id="GO:0002227">
    <property type="term" value="P:innate immune response in mucosa"/>
    <property type="evidence" value="ECO:0000314"/>
    <property type="project" value="UniProtKB"/>
</dbReference>
<dbReference type="GO" id="GO:0031640">
    <property type="term" value="P:killing of cells of another organism"/>
    <property type="evidence" value="ECO:0000314"/>
    <property type="project" value="UniProtKB"/>
</dbReference>
<dbReference type="CDD" id="cd22910">
    <property type="entry name" value="HFD_H2B"/>
    <property type="match status" value="1"/>
</dbReference>
<dbReference type="FunFam" id="1.10.20.10:FF:000003">
    <property type="entry name" value="Histone H2B"/>
    <property type="match status" value="1"/>
</dbReference>
<dbReference type="Gene3D" id="1.10.20.10">
    <property type="entry name" value="Histone, subunit A"/>
    <property type="match status" value="1"/>
</dbReference>
<dbReference type="IDEAL" id="IID00010"/>
<dbReference type="InterPro" id="IPR009072">
    <property type="entry name" value="Histone-fold"/>
</dbReference>
<dbReference type="InterPro" id="IPR007125">
    <property type="entry name" value="Histone_H2A/H2B/H3"/>
</dbReference>
<dbReference type="InterPro" id="IPR000558">
    <property type="entry name" value="Histone_H2B"/>
</dbReference>
<dbReference type="InterPro" id="IPR055333">
    <property type="entry name" value="HISTONE_H2B_site"/>
</dbReference>
<dbReference type="PANTHER" id="PTHR23428">
    <property type="entry name" value="HISTONE H2B"/>
    <property type="match status" value="1"/>
</dbReference>
<dbReference type="Pfam" id="PF00125">
    <property type="entry name" value="Histone"/>
    <property type="match status" value="1"/>
</dbReference>
<dbReference type="PRINTS" id="PR00621">
    <property type="entry name" value="HISTONEH2B"/>
</dbReference>
<dbReference type="SMART" id="SM00427">
    <property type="entry name" value="H2B"/>
    <property type="match status" value="1"/>
</dbReference>
<dbReference type="SUPFAM" id="SSF47113">
    <property type="entry name" value="Histone-fold"/>
    <property type="match status" value="1"/>
</dbReference>
<dbReference type="PROSITE" id="PS00357">
    <property type="entry name" value="HISTONE_H2B"/>
    <property type="match status" value="1"/>
</dbReference>
<evidence type="ECO:0000250" key="1">
    <source>
        <dbReference type="UniProtKB" id="P23527"/>
    </source>
</evidence>
<evidence type="ECO:0000250" key="2">
    <source>
        <dbReference type="UniProtKB" id="P33778"/>
    </source>
</evidence>
<evidence type="ECO:0000250" key="3">
    <source>
        <dbReference type="UniProtKB" id="P58876"/>
    </source>
</evidence>
<evidence type="ECO:0000250" key="4">
    <source>
        <dbReference type="UniProtKB" id="P62807"/>
    </source>
</evidence>
<evidence type="ECO:0000250" key="5">
    <source>
        <dbReference type="UniProtKB" id="Q00729"/>
    </source>
</evidence>
<evidence type="ECO:0000250" key="6">
    <source>
        <dbReference type="UniProtKB" id="Q5QNW6"/>
    </source>
</evidence>
<evidence type="ECO:0000250" key="7">
    <source>
        <dbReference type="UniProtKB" id="Q64475"/>
    </source>
</evidence>
<evidence type="ECO:0000250" key="8">
    <source>
        <dbReference type="UniProtKB" id="Q6ZWY9"/>
    </source>
</evidence>
<evidence type="ECO:0000250" key="9">
    <source>
        <dbReference type="UniProtKB" id="Q8CGP1"/>
    </source>
</evidence>
<evidence type="ECO:0000250" key="10">
    <source>
        <dbReference type="UniProtKB" id="Q96A08"/>
    </source>
</evidence>
<evidence type="ECO:0000256" key="11">
    <source>
        <dbReference type="SAM" id="MobiDB-lite"/>
    </source>
</evidence>
<evidence type="ECO:0000269" key="12">
    <source>
    </source>
</evidence>
<evidence type="ECO:0000269" key="13">
    <source>
    </source>
</evidence>
<evidence type="ECO:0000269" key="14">
    <source>
    </source>
</evidence>
<evidence type="ECO:0000269" key="15">
    <source>
    </source>
</evidence>
<evidence type="ECO:0000269" key="16">
    <source>
    </source>
</evidence>
<evidence type="ECO:0000269" key="17">
    <source>
    </source>
</evidence>
<evidence type="ECO:0000269" key="18">
    <source>
    </source>
</evidence>
<evidence type="ECO:0000269" key="19">
    <source>
    </source>
</evidence>
<evidence type="ECO:0000269" key="20">
    <source>
    </source>
</evidence>
<evidence type="ECO:0000269" key="21">
    <source>
    </source>
</evidence>
<evidence type="ECO:0000269" key="22">
    <source>
    </source>
</evidence>
<evidence type="ECO:0000269" key="23">
    <source>
    </source>
</evidence>
<evidence type="ECO:0000269" key="24">
    <source>
    </source>
</evidence>
<evidence type="ECO:0000269" key="25">
    <source>
    </source>
</evidence>
<evidence type="ECO:0000269" key="26">
    <source>
    </source>
</evidence>
<evidence type="ECO:0000269" key="27">
    <source>
    </source>
</evidence>
<evidence type="ECO:0000269" key="28">
    <source>
    </source>
</evidence>
<evidence type="ECO:0000269" key="29">
    <source>
    </source>
</evidence>
<evidence type="ECO:0000269" key="30">
    <source>
    </source>
</evidence>
<evidence type="ECO:0000305" key="31"/>
<evidence type="ECO:0000312" key="32">
    <source>
        <dbReference type="HGNC" id="HGNC:13954"/>
    </source>
</evidence>
<evidence type="ECO:0007744" key="33">
    <source>
        <dbReference type="PDB" id="6Y5D"/>
    </source>
</evidence>
<evidence type="ECO:0007829" key="34">
    <source>
        <dbReference type="PDB" id="6KE9"/>
    </source>
</evidence>
<evidence type="ECO:0007829" key="35">
    <source>
        <dbReference type="PDB" id="8HR1"/>
    </source>
</evidence>
<sequence>MPEPAKSAPAPKKGSKKAVTKAQKKDGKKRKRSRKESYSVYVYKVLKQVHPDTGISSKAMGIMNSFVNDIFERIAGEASRLAHYNKRSTITSREIQTAVRLLLPGELAKHAVSEGTKAVTKYTSAK</sequence>
<feature type="initiator methionine" description="Removed" evidence="1 12 14 15 30">
    <location>
        <position position="1"/>
    </location>
</feature>
<feature type="chain" id="PRO_0000071828" description="Histone H2B type 1-K">
    <location>
        <begin position="2"/>
        <end position="126"/>
    </location>
</feature>
<feature type="region of interest" description="Disordered" evidence="11">
    <location>
        <begin position="1"/>
        <end position="36"/>
    </location>
</feature>
<feature type="compositionally biased region" description="Low complexity" evidence="11">
    <location>
        <begin position="1"/>
        <end position="12"/>
    </location>
</feature>
<feature type="modified residue" description="N-acetylproline" evidence="1">
    <location>
        <position position="2"/>
    </location>
</feature>
<feature type="modified residue" description="ADP-ribosyl glutamic acid" evidence="26">
    <location>
        <position position="3"/>
    </location>
</feature>
<feature type="modified residue" description="N6-(2-hydroxyisobutyryl)lysine; alternate" evidence="23">
    <location>
        <position position="6"/>
    </location>
</feature>
<feature type="modified residue" description="N6-(beta-hydroxybutyryl)lysine; alternate" evidence="25">
    <location>
        <position position="6"/>
    </location>
</feature>
<feature type="modified residue" description="N6-acetyllysine; alternate" evidence="16 18">
    <location>
        <position position="6"/>
    </location>
</feature>
<feature type="modified residue" description="N6-butyryllysine; alternate" evidence="24">
    <location>
        <position position="6"/>
    </location>
</feature>
<feature type="modified residue" description="N6-crotonyllysine; alternate" evidence="21">
    <location>
        <position position="6"/>
    </location>
</feature>
<feature type="modified residue" description="N6-lactoyllysine; alternate" evidence="28">
    <location>
        <position position="6"/>
    </location>
</feature>
<feature type="modified residue" description="ADP-ribosylserine" evidence="29">
    <location>
        <position position="7"/>
    </location>
</feature>
<feature type="modified residue" description="N6-(beta-hydroxybutyryl)lysine; alternate" evidence="25">
    <location>
        <position position="12"/>
    </location>
</feature>
<feature type="modified residue" description="N6-acetyllysine; alternate" evidence="18">
    <location>
        <position position="12"/>
    </location>
</feature>
<feature type="modified residue" description="N6-crotonyllysine; alternate" evidence="21">
    <location>
        <position position="12"/>
    </location>
</feature>
<feature type="modified residue" description="N6-lactoyllysine; alternate" evidence="28">
    <location>
        <position position="12"/>
    </location>
</feature>
<feature type="modified residue" description="N6-(2-hydroxyisobutyryl)lysine; alternate" evidence="23">
    <location>
        <position position="13"/>
    </location>
</feature>
<feature type="modified residue" description="N6-acetyllysine; alternate" evidence="16 18">
    <location>
        <position position="13"/>
    </location>
</feature>
<feature type="modified residue" description="N6-crotonyllysine; alternate" evidence="21">
    <location>
        <position position="13"/>
    </location>
</feature>
<feature type="modified residue" description="Phosphoserine; by STK4/MST1" evidence="13">
    <location>
        <position position="15"/>
    </location>
</feature>
<feature type="modified residue" description="N6-acetyllysine; alternate" evidence="16 18">
    <location>
        <position position="16"/>
    </location>
</feature>
<feature type="modified residue" description="N6-crotonyllysine; alternate" evidence="21">
    <location>
        <position position="16"/>
    </location>
</feature>
<feature type="modified residue" description="N6-lactoyllysine; alternate" evidence="28">
    <location>
        <position position="16"/>
    </location>
</feature>
<feature type="modified residue" description="N6-(beta-hydroxybutyryl)lysine; alternate" evidence="25">
    <location>
        <position position="17"/>
    </location>
</feature>
<feature type="modified residue" description="N6-acetyllysine; alternate" evidence="18">
    <location>
        <position position="17"/>
    </location>
</feature>
<feature type="modified residue" description="N6-crotonyllysine; alternate" evidence="21">
    <location>
        <position position="17"/>
    </location>
</feature>
<feature type="modified residue" description="N6-glutaryllysine; alternate" evidence="27">
    <location>
        <position position="17"/>
    </location>
</feature>
<feature type="modified residue" description="N6-lactoyllysine; alternate" evidence="28">
    <location>
        <position position="17"/>
    </location>
</feature>
<feature type="modified residue" description="N6-(2-hydroxyisobutyryl)lysine; alternate" evidence="23">
    <location>
        <position position="21"/>
    </location>
</feature>
<feature type="modified residue" description="N6-(beta-hydroxybutyryl)lysine; alternate" evidence="25">
    <location>
        <position position="21"/>
    </location>
</feature>
<feature type="modified residue" description="N6-acetyllysine; alternate" evidence="16 18">
    <location>
        <position position="21"/>
    </location>
</feature>
<feature type="modified residue" description="N6-butyryllysine; alternate" evidence="24">
    <location>
        <position position="21"/>
    </location>
</feature>
<feature type="modified residue" description="N6-crotonyllysine; alternate" evidence="21">
    <location>
        <position position="21"/>
    </location>
</feature>
<feature type="modified residue" description="N6-lactoyllysine; alternate" evidence="28">
    <location>
        <position position="21"/>
    </location>
</feature>
<feature type="modified residue" description="N6-(2-hydroxyisobutyryl)lysine; alternate" evidence="23">
    <location>
        <position position="24"/>
    </location>
</feature>
<feature type="modified residue" description="N6-acetyllysine; alternate" evidence="2">
    <location>
        <position position="24"/>
    </location>
</feature>
<feature type="modified residue" description="N6-crotonyllysine; alternate" evidence="21">
    <location>
        <position position="24"/>
    </location>
</feature>
<feature type="modified residue" description="N6-lactoyllysine; alternate" evidence="28">
    <location>
        <position position="24"/>
    </location>
</feature>
<feature type="modified residue" description="N6-(2-hydroxyisobutyryl)lysine" evidence="23">
    <location>
        <position position="25"/>
    </location>
</feature>
<feature type="modified residue" description="N6-(2-hydroxyisobutyryl)lysine; alternate" evidence="23">
    <location>
        <position position="35"/>
    </location>
</feature>
<feature type="modified residue" description="N6-(beta-hydroxybutyryl)lysine; alternate" evidence="25">
    <location>
        <position position="35"/>
    </location>
</feature>
<feature type="modified residue" description="N6-crotonyllysine; alternate" evidence="21">
    <location>
        <position position="35"/>
    </location>
</feature>
<feature type="modified residue" description="N6-glutaryllysine; alternate" evidence="27">
    <location>
        <position position="35"/>
    </location>
</feature>
<feature type="modified residue" description="N6-succinyllysine; alternate" evidence="22">
    <location>
        <position position="35"/>
    </location>
</feature>
<feature type="modified residue" description="PolyADP-ribosyl glutamic acid" evidence="7">
    <location>
        <position position="36"/>
    </location>
</feature>
<feature type="modified residue" description="Phosphoserine; by AMPK" evidence="9">
    <location>
        <position position="37"/>
    </location>
</feature>
<feature type="modified residue" description="N6-(2-hydroxyisobutyryl)lysine; alternate" evidence="23">
    <location>
        <position position="44"/>
    </location>
</feature>
<feature type="modified residue" description="N6-glutaryllysine; alternate" evidence="27">
    <location>
        <position position="44"/>
    </location>
</feature>
<feature type="modified residue" description="N6-lactoyllysine; alternate" evidence="28">
    <location>
        <position position="44"/>
    </location>
</feature>
<feature type="modified residue" description="N6-(2-hydroxyisobutyryl)lysine; alternate" evidence="23">
    <location>
        <position position="47"/>
    </location>
</feature>
<feature type="modified residue" description="N6-glutaryllysine; alternate" evidence="27">
    <location>
        <position position="47"/>
    </location>
</feature>
<feature type="modified residue" description="N6-methyllysine; alternate" evidence="18">
    <location>
        <position position="47"/>
    </location>
</feature>
<feature type="modified residue" description="N6,N6-dimethyllysine; alternate" evidence="18">
    <location>
        <position position="58"/>
    </location>
</feature>
<feature type="modified residue" description="N6-(2-hydroxyisobutyryl)lysine; alternate" evidence="23">
    <location>
        <position position="58"/>
    </location>
</feature>
<feature type="modified residue" description="Dimethylated arginine" evidence="10">
    <location>
        <position position="80"/>
    </location>
</feature>
<feature type="modified residue" description="N6,N6,N6-trimethyllysine; alternate" evidence="10">
    <location>
        <position position="86"/>
    </location>
</feature>
<feature type="modified residue" description="N6-(2-hydroxyisobutyryl)lysine; alternate" evidence="23">
    <location>
        <position position="86"/>
    </location>
</feature>
<feature type="modified residue" description="N6-(beta-hydroxybutyryl)lysine; alternate" evidence="25">
    <location>
        <position position="86"/>
    </location>
</feature>
<feature type="modified residue" description="N6-acetyllysine; alternate" evidence="10">
    <location>
        <position position="86"/>
    </location>
</feature>
<feature type="modified residue" description="N6-lactoyllysine; alternate" evidence="28">
    <location>
        <position position="86"/>
    </location>
</feature>
<feature type="modified residue" description="Omega-N-methylarginine" evidence="10">
    <location>
        <position position="87"/>
    </location>
</feature>
<feature type="modified residue" description="Omega-N-methylarginine" evidence="10">
    <location>
        <position position="93"/>
    </location>
</feature>
<feature type="modified residue" description="N6-(2-hydroxyisobutyryl)lysine; alternate" evidence="23">
    <location>
        <position position="109"/>
    </location>
</feature>
<feature type="modified residue" description="N6-glutaryllysine; alternate" evidence="27">
    <location>
        <position position="109"/>
    </location>
</feature>
<feature type="modified residue" description="N6-lactoyllysine; alternate" evidence="28">
    <location>
        <position position="109"/>
    </location>
</feature>
<feature type="modified residue" description="N6-methyllysine; alternate" evidence="18">
    <location>
        <position position="109"/>
    </location>
</feature>
<feature type="modified residue" description="Phosphothreonine" evidence="5">
    <location>
        <position position="116"/>
    </location>
</feature>
<feature type="modified residue" description="N6-(2-hydroxyisobutyryl)lysine; alternate" evidence="23">
    <location>
        <position position="117"/>
    </location>
</feature>
<feature type="modified residue" description="N6-(beta-hydroxybutyryl)lysine; alternate" evidence="25">
    <location>
        <position position="117"/>
    </location>
</feature>
<feature type="modified residue" description="N6-glutaryllysine; alternate" evidence="27">
    <location>
        <position position="117"/>
    </location>
</feature>
<feature type="modified residue" description="N6-lactoyllysine; alternate" evidence="28">
    <location>
        <position position="117"/>
    </location>
</feature>
<feature type="modified residue" description="N6-malonyllysine; alternate" evidence="22">
    <location>
        <position position="117"/>
    </location>
</feature>
<feature type="modified residue" description="N6-methylated lysine; alternate" evidence="5">
    <location>
        <position position="117"/>
    </location>
</feature>
<feature type="modified residue" description="N6-succinyllysine; alternate" evidence="22">
    <location>
        <position position="117"/>
    </location>
</feature>
<feature type="modified residue" description="N6-(2-hydroxyisobutyryl)lysine; alternate" evidence="23">
    <location>
        <position position="121"/>
    </location>
</feature>
<feature type="modified residue" description="N6-(beta-hydroxybutyryl)lysine; alternate" evidence="25">
    <location>
        <position position="121"/>
    </location>
</feature>
<feature type="modified residue" description="N6-glutaryllysine; alternate" evidence="27">
    <location>
        <position position="121"/>
    </location>
</feature>
<feature type="modified residue" description="N6-lactoyllysine; alternate" evidence="28">
    <location>
        <position position="121"/>
    </location>
</feature>
<feature type="modified residue" description="N6-succinyllysine; alternate" evidence="22">
    <location>
        <position position="121"/>
    </location>
</feature>
<feature type="glycosylation site" description="O-linked (GlcNAc) serine" evidence="4">
    <location>
        <position position="113"/>
    </location>
</feature>
<feature type="cross-link" description="Glycyl lysine isopeptide (Lys-Gly) (interchain with G-Cter in SUMO2); alternate" evidence="3">
    <location>
        <position position="6"/>
    </location>
</feature>
<feature type="cross-link" description="Glycyl lysine isopeptide (Lys-Gly) (interchain with G-Cter in SUMO2); alternate" evidence="6">
    <location>
        <position position="21"/>
    </location>
</feature>
<feature type="cross-link" description="Glycyl lysine isopeptide (Lys-Gly) (interchain with G-Cter in ubiquitin); alternate" evidence="20">
    <location>
        <position position="35"/>
    </location>
</feature>
<feature type="cross-link" description="Glycyl lysine isopeptide (Lys-Gly) (interchain with G-Cter in ubiquitin); alternate" evidence="17 18 19">
    <location>
        <position position="121"/>
    </location>
</feature>
<feature type="helix" evidence="34">
    <location>
        <begin position="39"/>
        <end position="49"/>
    </location>
</feature>
<feature type="strand" evidence="35">
    <location>
        <begin position="50"/>
        <end position="52"/>
    </location>
</feature>
<feature type="helix" evidence="34">
    <location>
        <begin position="57"/>
        <end position="84"/>
    </location>
</feature>
<feature type="strand" evidence="34">
    <location>
        <begin position="88"/>
        <end position="90"/>
    </location>
</feature>
<feature type="helix" evidence="34">
    <location>
        <begin position="92"/>
        <end position="102"/>
    </location>
</feature>
<feature type="helix" evidence="34">
    <location>
        <begin position="107"/>
        <end position="124"/>
    </location>
</feature>
<proteinExistence type="evidence at protein level"/>
<keyword id="KW-0002">3D-structure</keyword>
<keyword id="KW-0007">Acetylation</keyword>
<keyword id="KW-0013">ADP-ribosylation</keyword>
<keyword id="KW-0044">Antibiotic</keyword>
<keyword id="KW-0929">Antimicrobial</keyword>
<keyword id="KW-0158">Chromosome</keyword>
<keyword id="KW-0903">Direct protein sequencing</keyword>
<keyword id="KW-0238">DNA-binding</keyword>
<keyword id="KW-0325">Glycoprotein</keyword>
<keyword id="KW-0379">Hydroxylation</keyword>
<keyword id="KW-1017">Isopeptide bond</keyword>
<keyword id="KW-0488">Methylation</keyword>
<keyword id="KW-0544">Nucleosome core</keyword>
<keyword id="KW-0539">Nucleus</keyword>
<keyword id="KW-0597">Phosphoprotein</keyword>
<keyword id="KW-1185">Reference proteome</keyword>
<keyword id="KW-0832">Ubl conjugation</keyword>
<reference key="1">
    <citation type="journal article" date="1998" name="Mol. Cell. Biol.">
        <title>Core histones and HIRIP3, a novel histone-binding protein, directly interact with WD repeat protein HIRA.</title>
        <authorList>
            <person name="Lorain S."/>
            <person name="Quivy J.-P."/>
            <person name="Monier-Gavelle F."/>
            <person name="Scamps C."/>
            <person name="Lecluse Y."/>
            <person name="Almouzni G."/>
            <person name="Lipinski M."/>
        </authorList>
    </citation>
    <scope>NUCLEOTIDE SEQUENCE [MRNA]</scope>
    <scope>INTERACTION WITH HIRA</scope>
    <source>
        <tissue>Cervix carcinoma</tissue>
    </source>
</reference>
<reference key="2">
    <citation type="journal article" date="2002" name="Genomics">
        <title>The human and mouse replication-dependent histone genes.</title>
        <authorList>
            <person name="Marzluff W.F."/>
            <person name="Gongidi P."/>
            <person name="Woods K.R."/>
            <person name="Jin J."/>
            <person name="Maltais L.J."/>
        </authorList>
    </citation>
    <scope>NUCLEOTIDE SEQUENCE [GENOMIC DNA]</scope>
</reference>
<reference key="3">
    <citation type="journal article" date="2004" name="Nat. Genet.">
        <title>Complete sequencing and characterization of 21,243 full-length human cDNAs.</title>
        <authorList>
            <person name="Ota T."/>
            <person name="Suzuki Y."/>
            <person name="Nishikawa T."/>
            <person name="Otsuki T."/>
            <person name="Sugiyama T."/>
            <person name="Irie R."/>
            <person name="Wakamatsu A."/>
            <person name="Hayashi K."/>
            <person name="Sato H."/>
            <person name="Nagai K."/>
            <person name="Kimura K."/>
            <person name="Makita H."/>
            <person name="Sekine M."/>
            <person name="Obayashi M."/>
            <person name="Nishi T."/>
            <person name="Shibahara T."/>
            <person name="Tanaka T."/>
            <person name="Ishii S."/>
            <person name="Yamamoto J."/>
            <person name="Saito K."/>
            <person name="Kawai Y."/>
            <person name="Isono Y."/>
            <person name="Nakamura Y."/>
            <person name="Nagahari K."/>
            <person name="Murakami K."/>
            <person name="Yasuda T."/>
            <person name="Iwayanagi T."/>
            <person name="Wagatsuma M."/>
            <person name="Shiratori A."/>
            <person name="Sudo H."/>
            <person name="Hosoiri T."/>
            <person name="Kaku Y."/>
            <person name="Kodaira H."/>
            <person name="Kondo H."/>
            <person name="Sugawara M."/>
            <person name="Takahashi M."/>
            <person name="Kanda K."/>
            <person name="Yokoi T."/>
            <person name="Furuya T."/>
            <person name="Kikkawa E."/>
            <person name="Omura Y."/>
            <person name="Abe K."/>
            <person name="Kamihara K."/>
            <person name="Katsuta N."/>
            <person name="Sato K."/>
            <person name="Tanikawa M."/>
            <person name="Yamazaki M."/>
            <person name="Ninomiya K."/>
            <person name="Ishibashi T."/>
            <person name="Yamashita H."/>
            <person name="Murakawa K."/>
            <person name="Fujimori K."/>
            <person name="Tanai H."/>
            <person name="Kimata M."/>
            <person name="Watanabe M."/>
            <person name="Hiraoka S."/>
            <person name="Chiba Y."/>
            <person name="Ishida S."/>
            <person name="Ono Y."/>
            <person name="Takiguchi S."/>
            <person name="Watanabe S."/>
            <person name="Yosida M."/>
            <person name="Hotuta T."/>
            <person name="Kusano J."/>
            <person name="Kanehori K."/>
            <person name="Takahashi-Fujii A."/>
            <person name="Hara H."/>
            <person name="Tanase T.-O."/>
            <person name="Nomura Y."/>
            <person name="Togiya S."/>
            <person name="Komai F."/>
            <person name="Hara R."/>
            <person name="Takeuchi K."/>
            <person name="Arita M."/>
            <person name="Imose N."/>
            <person name="Musashino K."/>
            <person name="Yuuki H."/>
            <person name="Oshima A."/>
            <person name="Sasaki N."/>
            <person name="Aotsuka S."/>
            <person name="Yoshikawa Y."/>
            <person name="Matsunawa H."/>
            <person name="Ichihara T."/>
            <person name="Shiohata N."/>
            <person name="Sano S."/>
            <person name="Moriya S."/>
            <person name="Momiyama H."/>
            <person name="Satoh N."/>
            <person name="Takami S."/>
            <person name="Terashima Y."/>
            <person name="Suzuki O."/>
            <person name="Nakagawa S."/>
            <person name="Senoh A."/>
            <person name="Mizoguchi H."/>
            <person name="Goto Y."/>
            <person name="Shimizu F."/>
            <person name="Wakebe H."/>
            <person name="Hishigaki H."/>
            <person name="Watanabe T."/>
            <person name="Sugiyama A."/>
            <person name="Takemoto M."/>
            <person name="Kawakami B."/>
            <person name="Yamazaki M."/>
            <person name="Watanabe K."/>
            <person name="Kumagai A."/>
            <person name="Itakura S."/>
            <person name="Fukuzumi Y."/>
            <person name="Fujimori Y."/>
            <person name="Komiyama M."/>
            <person name="Tashiro H."/>
            <person name="Tanigami A."/>
            <person name="Fujiwara T."/>
            <person name="Ono T."/>
            <person name="Yamada K."/>
            <person name="Fujii Y."/>
            <person name="Ozaki K."/>
            <person name="Hirao M."/>
            <person name="Ohmori Y."/>
            <person name="Kawabata A."/>
            <person name="Hikiji T."/>
            <person name="Kobatake N."/>
            <person name="Inagaki H."/>
            <person name="Ikema Y."/>
            <person name="Okamoto S."/>
            <person name="Okitani R."/>
            <person name="Kawakami T."/>
            <person name="Noguchi S."/>
            <person name="Itoh T."/>
            <person name="Shigeta K."/>
            <person name="Senba T."/>
            <person name="Matsumura K."/>
            <person name="Nakajima Y."/>
            <person name="Mizuno T."/>
            <person name="Morinaga M."/>
            <person name="Sasaki M."/>
            <person name="Togashi T."/>
            <person name="Oyama M."/>
            <person name="Hata H."/>
            <person name="Watanabe M."/>
            <person name="Komatsu T."/>
            <person name="Mizushima-Sugano J."/>
            <person name="Satoh T."/>
            <person name="Shirai Y."/>
            <person name="Takahashi Y."/>
            <person name="Nakagawa K."/>
            <person name="Okumura K."/>
            <person name="Nagase T."/>
            <person name="Nomura N."/>
            <person name="Kikuchi H."/>
            <person name="Masuho Y."/>
            <person name="Yamashita R."/>
            <person name="Nakai K."/>
            <person name="Yada T."/>
            <person name="Nakamura Y."/>
            <person name="Ohara O."/>
            <person name="Isogai T."/>
            <person name="Sugano S."/>
        </authorList>
    </citation>
    <scope>NUCLEOTIDE SEQUENCE [LARGE SCALE MRNA]</scope>
    <source>
        <tissue>Stomach</tissue>
    </source>
</reference>
<reference key="4">
    <citation type="journal article" date="2003" name="Nature">
        <title>The DNA sequence and analysis of human chromosome 6.</title>
        <authorList>
            <person name="Mungall A.J."/>
            <person name="Palmer S.A."/>
            <person name="Sims S.K."/>
            <person name="Edwards C.A."/>
            <person name="Ashurst J.L."/>
            <person name="Wilming L."/>
            <person name="Jones M.C."/>
            <person name="Horton R."/>
            <person name="Hunt S.E."/>
            <person name="Scott C.E."/>
            <person name="Gilbert J.G.R."/>
            <person name="Clamp M.E."/>
            <person name="Bethel G."/>
            <person name="Milne S."/>
            <person name="Ainscough R."/>
            <person name="Almeida J.P."/>
            <person name="Ambrose K.D."/>
            <person name="Andrews T.D."/>
            <person name="Ashwell R.I.S."/>
            <person name="Babbage A.K."/>
            <person name="Bagguley C.L."/>
            <person name="Bailey J."/>
            <person name="Banerjee R."/>
            <person name="Barker D.J."/>
            <person name="Barlow K.F."/>
            <person name="Bates K."/>
            <person name="Beare D.M."/>
            <person name="Beasley H."/>
            <person name="Beasley O."/>
            <person name="Bird C.P."/>
            <person name="Blakey S.E."/>
            <person name="Bray-Allen S."/>
            <person name="Brook J."/>
            <person name="Brown A.J."/>
            <person name="Brown J.Y."/>
            <person name="Burford D.C."/>
            <person name="Burrill W."/>
            <person name="Burton J."/>
            <person name="Carder C."/>
            <person name="Carter N.P."/>
            <person name="Chapman J.C."/>
            <person name="Clark S.Y."/>
            <person name="Clark G."/>
            <person name="Clee C.M."/>
            <person name="Clegg S."/>
            <person name="Cobley V."/>
            <person name="Collier R.E."/>
            <person name="Collins J.E."/>
            <person name="Colman L.K."/>
            <person name="Corby N.R."/>
            <person name="Coville G.J."/>
            <person name="Culley K.M."/>
            <person name="Dhami P."/>
            <person name="Davies J."/>
            <person name="Dunn M."/>
            <person name="Earthrowl M.E."/>
            <person name="Ellington A.E."/>
            <person name="Evans K.A."/>
            <person name="Faulkner L."/>
            <person name="Francis M.D."/>
            <person name="Frankish A."/>
            <person name="Frankland J."/>
            <person name="French L."/>
            <person name="Garner P."/>
            <person name="Garnett J."/>
            <person name="Ghori M.J."/>
            <person name="Gilby L.M."/>
            <person name="Gillson C.J."/>
            <person name="Glithero R.J."/>
            <person name="Grafham D.V."/>
            <person name="Grant M."/>
            <person name="Gribble S."/>
            <person name="Griffiths C."/>
            <person name="Griffiths M.N.D."/>
            <person name="Hall R."/>
            <person name="Halls K.S."/>
            <person name="Hammond S."/>
            <person name="Harley J.L."/>
            <person name="Hart E.A."/>
            <person name="Heath P.D."/>
            <person name="Heathcott R."/>
            <person name="Holmes S.J."/>
            <person name="Howden P.J."/>
            <person name="Howe K.L."/>
            <person name="Howell G.R."/>
            <person name="Huckle E."/>
            <person name="Humphray S.J."/>
            <person name="Humphries M.D."/>
            <person name="Hunt A.R."/>
            <person name="Johnson C.M."/>
            <person name="Joy A.A."/>
            <person name="Kay M."/>
            <person name="Keenan S.J."/>
            <person name="Kimberley A.M."/>
            <person name="King A."/>
            <person name="Laird G.K."/>
            <person name="Langford C."/>
            <person name="Lawlor S."/>
            <person name="Leongamornlert D.A."/>
            <person name="Leversha M."/>
            <person name="Lloyd C.R."/>
            <person name="Lloyd D.M."/>
            <person name="Loveland J.E."/>
            <person name="Lovell J."/>
            <person name="Martin S."/>
            <person name="Mashreghi-Mohammadi M."/>
            <person name="Maslen G.L."/>
            <person name="Matthews L."/>
            <person name="McCann O.T."/>
            <person name="McLaren S.J."/>
            <person name="McLay K."/>
            <person name="McMurray A."/>
            <person name="Moore M.J.F."/>
            <person name="Mullikin J.C."/>
            <person name="Niblett D."/>
            <person name="Nickerson T."/>
            <person name="Novik K.L."/>
            <person name="Oliver K."/>
            <person name="Overton-Larty E.K."/>
            <person name="Parker A."/>
            <person name="Patel R."/>
            <person name="Pearce A.V."/>
            <person name="Peck A.I."/>
            <person name="Phillimore B.J.C.T."/>
            <person name="Phillips S."/>
            <person name="Plumb R.W."/>
            <person name="Porter K.M."/>
            <person name="Ramsey Y."/>
            <person name="Ranby S.A."/>
            <person name="Rice C.M."/>
            <person name="Ross M.T."/>
            <person name="Searle S.M."/>
            <person name="Sehra H.K."/>
            <person name="Sheridan E."/>
            <person name="Skuce C.D."/>
            <person name="Smith S."/>
            <person name="Smith M."/>
            <person name="Spraggon L."/>
            <person name="Squares S.L."/>
            <person name="Steward C.A."/>
            <person name="Sycamore N."/>
            <person name="Tamlyn-Hall G."/>
            <person name="Tester J."/>
            <person name="Theaker A.J."/>
            <person name="Thomas D.W."/>
            <person name="Thorpe A."/>
            <person name="Tracey A."/>
            <person name="Tromans A."/>
            <person name="Tubby B."/>
            <person name="Wall M."/>
            <person name="Wallis J.M."/>
            <person name="West A.P."/>
            <person name="White S.S."/>
            <person name="Whitehead S.L."/>
            <person name="Whittaker H."/>
            <person name="Wild A."/>
            <person name="Willey D.J."/>
            <person name="Wilmer T.E."/>
            <person name="Wood J.M."/>
            <person name="Wray P.W."/>
            <person name="Wyatt J.C."/>
            <person name="Young L."/>
            <person name="Younger R.M."/>
            <person name="Bentley D.R."/>
            <person name="Coulson A."/>
            <person name="Durbin R.M."/>
            <person name="Hubbard T."/>
            <person name="Sulston J.E."/>
            <person name="Dunham I."/>
            <person name="Rogers J."/>
            <person name="Beck S."/>
        </authorList>
    </citation>
    <scope>NUCLEOTIDE SEQUENCE [LARGE SCALE GENOMIC DNA]</scope>
</reference>
<reference key="5">
    <citation type="submission" date="2005-07" db="EMBL/GenBank/DDBJ databases">
        <authorList>
            <person name="Mural R.J."/>
            <person name="Istrail S."/>
            <person name="Sutton G.G."/>
            <person name="Florea L."/>
            <person name="Halpern A.L."/>
            <person name="Mobarry C.M."/>
            <person name="Lippert R."/>
            <person name="Walenz B."/>
            <person name="Shatkay H."/>
            <person name="Dew I."/>
            <person name="Miller J.R."/>
            <person name="Flanigan M.J."/>
            <person name="Edwards N.J."/>
            <person name="Bolanos R."/>
            <person name="Fasulo D."/>
            <person name="Halldorsson B.V."/>
            <person name="Hannenhalli S."/>
            <person name="Turner R."/>
            <person name="Yooseph S."/>
            <person name="Lu F."/>
            <person name="Nusskern D.R."/>
            <person name="Shue B.C."/>
            <person name="Zheng X.H."/>
            <person name="Zhong F."/>
            <person name="Delcher A.L."/>
            <person name="Huson D.H."/>
            <person name="Kravitz S.A."/>
            <person name="Mouchard L."/>
            <person name="Reinert K."/>
            <person name="Remington K.A."/>
            <person name="Clark A.G."/>
            <person name="Waterman M.S."/>
            <person name="Eichler E.E."/>
            <person name="Adams M.D."/>
            <person name="Hunkapiller M.W."/>
            <person name="Myers E.W."/>
            <person name="Venter J.C."/>
        </authorList>
    </citation>
    <scope>NUCLEOTIDE SEQUENCE [LARGE SCALE GENOMIC DNA]</scope>
</reference>
<reference key="6">
    <citation type="journal article" date="2004" name="Genome Res.">
        <title>The status, quality, and expansion of the NIH full-length cDNA project: the Mammalian Gene Collection (MGC).</title>
        <authorList>
            <consortium name="The MGC Project Team"/>
        </authorList>
    </citation>
    <scope>NUCLEOTIDE SEQUENCE [LARGE SCALE MRNA]</scope>
    <source>
        <tissue>Cervix</tissue>
        <tissue>Pancreas</tissue>
        <tissue>Uterus</tissue>
    </source>
</reference>
<reference key="7">
    <citation type="journal article" date="2002" name="J. Immunol.">
        <title>Endotoxin-neutralizing antimicrobial proteins of the human placenta.</title>
        <authorList>
            <person name="Kim H.S."/>
            <person name="Cho J.H."/>
            <person name="Park H.W."/>
            <person name="Yoon H."/>
            <person name="Kim M.S."/>
            <person name="Kim S.C."/>
        </authorList>
    </citation>
    <scope>PROTEIN SEQUENCE OF 2-21</scope>
    <scope>FUNCTION</scope>
</reference>
<reference key="8">
    <citation type="journal article" date="1996" name="Eur. J. Biochem.">
        <title>Biochemical and antibacterial analysis of human wound and blister fluid.</title>
        <authorList>
            <person name="Frohm M."/>
            <person name="Gunne H."/>
            <person name="Bergman A.-C."/>
            <person name="Agerberth B."/>
            <person name="Bergman T."/>
            <person name="Boman A."/>
            <person name="Liden S."/>
            <person name="Joernvall H."/>
            <person name="Boman H.G."/>
        </authorList>
    </citation>
    <scope>PROTEIN SEQUENCE OF 2-13</scope>
</reference>
<reference key="9">
    <citation type="journal article" date="2003" name="Peptides">
        <title>Antimicrobial peptides in the first line defence of human colon mucosa.</title>
        <authorList>
            <person name="Tollin M."/>
            <person name="Bergman P."/>
            <person name="Svenberg T."/>
            <person name="Joernvall H."/>
            <person name="Gudmundsson G.H."/>
            <person name="Agerberth B."/>
        </authorList>
    </citation>
    <scope>PROTEIN SEQUENCE OF 2-13</scope>
    <scope>FUNCTION</scope>
</reference>
<reference key="10">
    <citation type="journal article" date="2003" name="Peptides">
        <title>Antimicrobial polypeptides of the human colonic epithelium.</title>
        <authorList>
            <person name="Howell S.J."/>
            <person name="Wilk D."/>
            <person name="Yadav S.P."/>
            <person name="Bevins C.L."/>
        </authorList>
    </citation>
    <scope>PROTEIN SEQUENCE OF 2-13</scope>
    <scope>FUNCTION</scope>
</reference>
<reference key="11">
    <citation type="journal article" date="2006" name="Mol. Cell. Proteomics">
        <title>Quantitative proteomic analysis of post-translational modifications of human histones.</title>
        <authorList>
            <person name="Beck H.C."/>
            <person name="Nielsen E.C."/>
            <person name="Matthiesen R."/>
            <person name="Jensen L.H."/>
            <person name="Sehested M."/>
            <person name="Finn P."/>
            <person name="Grauslund M."/>
            <person name="Hansen A.M."/>
            <person name="Jensen O.N."/>
        </authorList>
    </citation>
    <scope>PROTEIN SEQUENCE OF 7-24</scope>
    <scope>ACETYLATION AT LYS-6; LYS-12; LYS-13; LYS-16; LYS-17 AND LYS-21</scope>
    <scope>METHYLATION AT LYS-47; LYS-58 AND LYS-109</scope>
    <scope>UBIQUITINATION AT LYS-121</scope>
    <scope>IDENTIFICATION BY MASS SPECTROMETRY</scope>
</reference>
<reference key="12">
    <citation type="journal article" date="2003" name="Cell">
        <title>Apoptotic phosphorylation of histone H2B is mediated by mammalian sterile twenty kinase.</title>
        <authorList>
            <person name="Cheung W.L."/>
            <person name="Ajiro K."/>
            <person name="Samejima K."/>
            <person name="Kloc M."/>
            <person name="Cheung P."/>
            <person name="Mizzen C.A."/>
            <person name="Beeser A."/>
            <person name="Etkin L.D."/>
            <person name="Chernoff J."/>
            <person name="Earnshaw W.C."/>
            <person name="Allis C.D."/>
        </authorList>
    </citation>
    <scope>PHOSPHORYLATION AT SER-15</scope>
</reference>
<reference key="13">
    <citation type="journal article" date="2005" name="Mol. Cell">
        <title>Monoubiquitination of human histone H2B: the factors involved and their roles in HOX gene regulation.</title>
        <authorList>
            <person name="Zhu B."/>
            <person name="Zheng Y."/>
            <person name="Pham A.-D."/>
            <person name="Mandal S.S."/>
            <person name="Erdjument-Bromage H."/>
            <person name="Tempst P."/>
            <person name="Reinberg D."/>
        </authorList>
    </citation>
    <scope>UBIQUITINATION AT LYS-121</scope>
</reference>
<reference key="14">
    <citation type="journal article" date="2005" name="Mol. Cell. Biochem.">
        <title>Inhibition of core histones acetylation by carcinogenic nickel(II).</title>
        <authorList>
            <person name="Golebiowski F."/>
            <person name="Kasprzak K.S."/>
        </authorList>
    </citation>
    <scope>ACETYLATION AT LYS-6; LYS-13; LYS-16 AND LYS-21</scope>
</reference>
<reference key="15">
    <citation type="journal article" date="2006" name="Cell">
        <title>Histone H2B monoubiquitination functions cooperatively with FACT to regulate elongation by RNA polymerase II.</title>
        <authorList>
            <person name="Pavri R."/>
            <person name="Zhu B."/>
            <person name="Li G."/>
            <person name="Trojer P."/>
            <person name="Mandal S."/>
            <person name="Shilatifard A."/>
            <person name="Reinberg D."/>
        </authorList>
    </citation>
    <scope>UBIQUITINATION AT LYS-121</scope>
</reference>
<reference key="16">
    <citation type="journal article" date="2011" name="Mol. Cell">
        <title>The RING finger protein MSL2 in the MOF complex is an E3 ubiquitin ligase for H2B K34 and is involved in crosstalk with H3 K4 and K79 methylation.</title>
        <authorList>
            <person name="Wu L."/>
            <person name="Zee B.M."/>
            <person name="Wang Y."/>
            <person name="Garcia B.A."/>
            <person name="Dou Y."/>
        </authorList>
    </citation>
    <scope>UBIQUITINATION AT LYS-35</scope>
</reference>
<reference key="17">
    <citation type="journal article" date="2005" name="Nucleic Acids Res.">
        <title>Alteration of the nucleosomal DNA path in the crystal structure of a human nucleosome core particle.</title>
        <authorList>
            <person name="Tsunaka Y."/>
            <person name="Kajimura N."/>
            <person name="Tate S."/>
            <person name="Morikawa K."/>
        </authorList>
    </citation>
    <scope>X-RAY CRYSTALLOGRAPHY (2.5 ANGSTROMS)</scope>
</reference>
<reference key="18">
    <citation type="journal article" date="2006" name="J. Proteome Res.">
        <title>Gene-specific characterization of human histone H2B by electron capture dissociation.</title>
        <authorList>
            <person name="Siuti N."/>
            <person name="Roth M.J."/>
            <person name="Mizzen C.A."/>
            <person name="Kelleher N.L."/>
            <person name="Pesavento J.J."/>
        </authorList>
    </citation>
    <scope>IDENTIFICATION BY MASS SPECTROMETRY</scope>
</reference>
<reference key="19">
    <citation type="journal article" date="2011" name="Cell">
        <title>Identification of 67 histone marks and histone lysine crotonylation as a new type of histone modification.</title>
        <authorList>
            <person name="Tan M."/>
            <person name="Luo H."/>
            <person name="Lee S."/>
            <person name="Jin F."/>
            <person name="Yang J.S."/>
            <person name="Montellier E."/>
            <person name="Buchou T."/>
            <person name="Cheng Z."/>
            <person name="Rousseaux S."/>
            <person name="Rajagopal N."/>
            <person name="Lu Z."/>
            <person name="Ye Z."/>
            <person name="Zhu Q."/>
            <person name="Wysocka J."/>
            <person name="Ye Y."/>
            <person name="Khochbin S."/>
            <person name="Ren B."/>
            <person name="Zhao Y."/>
        </authorList>
    </citation>
    <scope>CROTONYLATION AT LYS-6; LYS-12; LYS-13; LYS-16; LYS-17; LYS-21; LYS-24 AND LYS-35</scope>
</reference>
<reference key="20">
    <citation type="journal article" date="2012" name="Mol. Cell. Proteomics">
        <title>Lysine succinylation and lysine malonylation in histones.</title>
        <authorList>
            <person name="Xie Z."/>
            <person name="Dai J."/>
            <person name="Dai L."/>
            <person name="Tan M."/>
            <person name="Cheng Z."/>
            <person name="Wu Y."/>
            <person name="Boeke J.D."/>
            <person name="Zhao Y."/>
        </authorList>
    </citation>
    <scope>SUCCINYLATION AT LYS-35; LYS-117 AND LYS-121</scope>
    <scope>MALONYLATION AT LYS-117</scope>
</reference>
<reference key="21">
    <citation type="journal article" date="2013" name="Genes Dev.">
        <title>USP49 deubiquitinates histone H2B and regulates cotranscriptional pre-mRNA splicing.</title>
        <authorList>
            <person name="Zhang Z."/>
            <person name="Jones A."/>
            <person name="Joo H.Y."/>
            <person name="Zhou D."/>
            <person name="Cao Y."/>
            <person name="Chen S."/>
            <person name="Erdjument-Bromage H."/>
            <person name="Renfrow M."/>
            <person name="He H."/>
            <person name="Tempst P."/>
            <person name="Townes T.M."/>
            <person name="Giles K.E."/>
            <person name="Ma L."/>
            <person name="Wang H."/>
        </authorList>
    </citation>
    <scope>UBIQUITINATION</scope>
    <scope>DEUBIQUITINATION BY USP49</scope>
</reference>
<reference key="22">
    <citation type="journal article" date="2014" name="Nat. Chem. Biol.">
        <title>Lysine 2-hydroxyisobutyrylation is a widely distributed active histone mark.</title>
        <authorList>
            <person name="Dai L."/>
            <person name="Peng C."/>
            <person name="Montellier E."/>
            <person name="Lu Z."/>
            <person name="Chen Y."/>
            <person name="Ishii H."/>
            <person name="Debernardi A."/>
            <person name="Buchou T."/>
            <person name="Rousseaux S."/>
            <person name="Jin F."/>
            <person name="Sabari B.R."/>
            <person name="Deng Z."/>
            <person name="Allis C.D."/>
            <person name="Ren B."/>
            <person name="Khochbin S."/>
            <person name="Zhao Y."/>
        </authorList>
    </citation>
    <scope>HYDROXYBUTYRYLATION AT LYS-6; LYS-13; LYS-21; LYS-24; LYS-25; LYS-35; LYS-44; LYS-47; LYS-58; LYS-86; LYS-109; LYS-117 AND LYS-121</scope>
</reference>
<reference key="23">
    <citation type="journal article" date="2016" name="Mol. Cell">
        <title>Dynamic competing histone H4 K5K8 acetylation and butyrylation are hallmarks of highly active gene promoters.</title>
        <authorList>
            <person name="Goudarzi A."/>
            <person name="Zhang D."/>
            <person name="Huang H."/>
            <person name="Barral S."/>
            <person name="Kwon O.K."/>
            <person name="Qi S."/>
            <person name="Tang Z."/>
            <person name="Buchou T."/>
            <person name="Vitte A.L."/>
            <person name="He T."/>
            <person name="Cheng Z."/>
            <person name="Montellier E."/>
            <person name="Gaucher J."/>
            <person name="Curtet S."/>
            <person name="Debernardi A."/>
            <person name="Charbonnier G."/>
            <person name="Puthier D."/>
            <person name="Petosa C."/>
            <person name="Panne D."/>
            <person name="Rousseaux S."/>
            <person name="Roeder R.G."/>
            <person name="Zhao Y."/>
            <person name="Khochbin S."/>
        </authorList>
    </citation>
    <scope>BUTYRYLATION AT LYS-6 AND LYS-21</scope>
</reference>
<reference key="24">
    <citation type="journal article" date="2016" name="Mol. Cell">
        <title>Metabolic regulation of gene expression by histone lysine beta-hydroxybutyrylation.</title>
        <authorList>
            <person name="Xie Z."/>
            <person name="Zhang D."/>
            <person name="Chung D."/>
            <person name="Tang Z."/>
            <person name="Huang H."/>
            <person name="Dai L."/>
            <person name="Qi S."/>
            <person name="Li J."/>
            <person name="Colak G."/>
            <person name="Chen Y."/>
            <person name="Xia C."/>
            <person name="Peng C."/>
            <person name="Ruan H."/>
            <person name="Kirkey M."/>
            <person name="Wang D."/>
            <person name="Jensen L.M."/>
            <person name="Kwon O.K."/>
            <person name="Lee S."/>
            <person name="Pletcher S.D."/>
            <person name="Tan M."/>
            <person name="Lombard D.B."/>
            <person name="White K.P."/>
            <person name="Zhao H."/>
            <person name="Li J."/>
            <person name="Roeder R.G."/>
            <person name="Yang X."/>
            <person name="Zhao Y."/>
        </authorList>
    </citation>
    <scope>HYDROXYBUTYRYLATION AT LYS-6; LYS-12; LYS-17; LYS-21; LYS-35; LYS-86; LYS-117 AND LYS-121</scope>
</reference>
<reference key="25">
    <citation type="journal article" date="2016" name="Nat. Commun.">
        <title>PARP3 is a sensor of nicked nucleosomes and monoribosylates histone H2B(Glu2).</title>
        <authorList>
            <person name="Grundy G.J."/>
            <person name="Polo L.M."/>
            <person name="Zeng Z."/>
            <person name="Rulten S.L."/>
            <person name="Hoch N.C."/>
            <person name="Paomephan P."/>
            <person name="Xu Y."/>
            <person name="Sweet S.M."/>
            <person name="Thorne A.W."/>
            <person name="Oliver A.W."/>
            <person name="Matthews S.J."/>
            <person name="Pearl L.H."/>
            <person name="Caldecott K.W."/>
        </authorList>
    </citation>
    <scope>ADP-RIBOSYLATION AT GLU-3</scope>
</reference>
<reference key="26">
    <citation type="journal article" date="2019" name="Mol. Cell">
        <title>Glutarylation of histone H4 lysine 91 regulates chromatin dynamics.</title>
        <authorList>
            <person name="Bao X."/>
            <person name="Liu Z."/>
            <person name="Zhang W."/>
            <person name="Gladysz K."/>
            <person name="Fung Y.M.E."/>
            <person name="Tian G."/>
            <person name="Xiong Y."/>
            <person name="Wong J.W.H."/>
            <person name="Yuen K.W.Y."/>
            <person name="Li X.D."/>
        </authorList>
    </citation>
    <scope>GLUTARYLATION AT LYS-17; LYS-35; LYS-44; LYS-47; LYS-109; LYS-117 AND LYS-121</scope>
</reference>
<reference key="27">
    <citation type="journal article" date="2019" name="Nature">
        <title>Metabolic regulation of gene expression by histone lactylation.</title>
        <authorList>
            <person name="Zhang D."/>
            <person name="Tang Z."/>
            <person name="Huang H."/>
            <person name="Zhou G."/>
            <person name="Cui C."/>
            <person name="Weng Y."/>
            <person name="Liu W."/>
            <person name="Kim S."/>
            <person name="Lee S."/>
            <person name="Perez-Neut M."/>
            <person name="Ding J."/>
            <person name="Czyz D."/>
            <person name="Hu R."/>
            <person name="Ye Z."/>
            <person name="He M."/>
            <person name="Zheng Y.G."/>
            <person name="Shuman H.A."/>
            <person name="Dai L."/>
            <person name="Ren B."/>
            <person name="Roeder R.G."/>
            <person name="Becker L."/>
            <person name="Zhao Y."/>
        </authorList>
    </citation>
    <scope>LACTYLATION AT LYS-6; LYS-12; LYS-16; LYS-17; LYS-21; LYS-24; LYS-44; LYS-86; LYS-109; LYS-117 AND LYS-121</scope>
</reference>
<reference key="28">
    <citation type="journal article" date="2021" name="Elife">
        <title>Serine ADP-ribosylation marks nucleosomes for ALC1-dependent chromatin remodeling.</title>
        <authorList>
            <person name="Mohapatra J."/>
            <person name="Tashiro K."/>
            <person name="Beckner R.L."/>
            <person name="Sierra J."/>
            <person name="Kilgore J.A."/>
            <person name="Williams N.S."/>
            <person name="Liszczak G."/>
        </authorList>
    </citation>
    <scope>ADP-RIBOSYLATION AT SER-7</scope>
</reference>
<reference evidence="33" key="29">
    <citation type="journal article" date="2020" name="Nature">
        <title>Structural mechanism of cGAS inhibition by the nucleosome.</title>
        <authorList>
            <person name="Pathare G.R."/>
            <person name="Decout A."/>
            <person name="Glueck S."/>
            <person name="Cavadini S."/>
            <person name="Makasheva K."/>
            <person name="Hovius R."/>
            <person name="Kempf G."/>
            <person name="Weiss J."/>
            <person name="Kozicka Z."/>
            <person name="Guey B."/>
            <person name="Melenec P."/>
            <person name="Fierz B."/>
            <person name="Thomae N.H."/>
            <person name="Ablasser A."/>
        </authorList>
    </citation>
    <scope>STRUCTURE BY ELECTRON MICROSCOPY (4.10 ANGSTROMS) IN COMPLEX WITH NUCLEOSOME CORE AND CGAS</scope>
</reference>
<comment type="function">
    <text>Core component of nucleosome. Nucleosomes wrap and compact DNA into chromatin, limiting DNA accessibility to the cellular machineries which require DNA as a template. Histones thereby play a central role in transcription regulation, DNA repair, DNA replication and chromosomal stability. DNA accessibility is regulated via a complex set of post-translational modifications of histones, also called histone code, and nucleosome remodeling.</text>
</comment>
<comment type="function">
    <text>Has broad antibacterial activity. May contribute to the formation of the functional antimicrobial barrier of the colonic epithelium, and to the bactericidal activity of amniotic fluid.</text>
</comment>
<comment type="subunit">
    <text>The nucleosome is a histone octamer containing two molecules each of H2A, H2B, H3 and H4 assembled in one H3-H4 heterotetramer and two H2A-H2B heterodimers. The octamer wraps approximately 147 bp of DNA.</text>
</comment>
<comment type="interaction">
    <interactant intactId="EBI-4409738">
        <id>O60814</id>
    </interactant>
    <interactant intactId="EBI-358419">
        <id>Q12824</id>
        <label>SMARCB1</label>
    </interactant>
    <organismsDiffer>false</organismsDiffer>
    <experiments>5</experiments>
</comment>
<comment type="interaction">
    <interactant intactId="EBI-4409738">
        <id>O60814</id>
    </interactant>
    <interactant intactId="EBI-15602554">
        <id>Q9QR71</id>
        <label>LANA1</label>
    </interactant>
    <organismsDiffer>true</organismsDiffer>
    <experiments>3</experiments>
</comment>
<comment type="subcellular location">
    <subcellularLocation>
        <location>Nucleus</location>
    </subcellularLocation>
    <subcellularLocation>
        <location>Chromosome</location>
    </subcellularLocation>
</comment>
<comment type="PTM">
    <text evidence="18">Monoubiquitination at Lys-35 (H2BK34Ub) by the MSL1/MSL2 dimer is required for histone H3 'Lys-4' (H3K4me) and 'Lys-79' (H3K79me) methylation and transcription activation at specific gene loci, such as HOXA9 and MEIS1 loci. Similarly, monoubiquitination at Lys-121 (H2BK120Ub) by the RNF20/40 complex gives a specific tag for epigenetic transcriptional activation and is also prerequisite for histone H3 'Lys-4' and 'Lys-79' methylation. It also functions cooperatively with the FACT dimer to stimulate elongation by RNA polymerase II. H2BK120Ub also acts as a regulator of mRNA splicing: deubiquitination by USP49 is required for efficient cotranscriptional splicing of a large set of exons.</text>
</comment>
<comment type="PTM">
    <text evidence="7 13">Phosphorylation at Ser-37 (H2BS36ph) by AMPK in response to stress promotes transcription (By similarity). Phosphorylated on Ser-15 (H2BS14ph) by STK4/MST1 during apoptosis; which facilitates apoptotic chromatin condensation (PubMed:12757711). Also phosphorylated on Ser-15 in response to DNA double strand breaks (DSBs), and in correlation with somatic hypermutation and immunoglobulin class-switch recombination.</text>
</comment>
<comment type="PTM">
    <text evidence="4">GlcNAcylation at Ser-113 promotes monoubiquitination of Lys-121. It fluctuates in response to extracellular glucose, and associates with transcribed genes (By similarity).</text>
</comment>
<comment type="PTM">
    <text evidence="8 26 29">ADP-ribosylated by PARP1 or PARP2 on Ser-7 (H2BS6ADPr) in response to DNA damage (PubMed:34874266). H2BS6ADPr promotes recruitment of CHD1L (PubMed:34874266). Mono-ADP-ribosylated on Glu-3 (H2BE2ADPr) by PARP3 in response to single-strand breaks (PubMed:27530147). Poly ADP-ribosylation on Glu-36 (H2BE35ADPr) by PARP1 regulates adipogenesis: it inhibits phosphorylation at Ser-37 (H2BS36ph), thereby blocking expression of pro-adipogenetic genes (By similarity).</text>
</comment>
<comment type="PTM">
    <text evidence="21">Crotonylation (Kcr) is specifically present in male germ cells and marks testis-specific genes in post-meiotic cells, including X-linked genes that escape sex chromosome inactivation in haploid cells. Crotonylation marks active promoters and enhancers and confers resistance to transcriptional repressors. It is also associated with post-meiotically activated genes on autosomes.</text>
</comment>
<comment type="PTM">
    <text evidence="28">Lactylated in macrophages by EP300/P300 by using lactoyl-CoA directly derived from endogenous or exogenous lactate, leading to stimulates gene transcription.</text>
</comment>
<comment type="similarity">
    <text evidence="31">Belongs to the histone H2B family.</text>
</comment>